<sequence length="162" mass="18593">MGIASAVNSLLLKEFAAAFVVTMRYFFKPKPTVNYPFEKNPISPRFRGEHALRRYPNGEERCIACKLCEAICPAQAITIEAGPRRNDGTRRTVRYDIDMVKCIYCGLCQEACPVDAIVEGPNFEFATETREELYYDKARLLANGDRWEREIARNIEQDAPYR</sequence>
<protein>
    <recommendedName>
        <fullName evidence="1">NADH-quinone oxidoreductase subunit I</fullName>
        <ecNumber evidence="1">7.1.1.-</ecNumber>
    </recommendedName>
    <alternativeName>
        <fullName evidence="1">NADH dehydrogenase I subunit I</fullName>
    </alternativeName>
    <alternativeName>
        <fullName evidence="1">NDH-1 subunit I</fullName>
    </alternativeName>
</protein>
<dbReference type="EC" id="7.1.1.-" evidence="1"/>
<dbReference type="EMBL" id="CP001196">
    <property type="protein sequence ID" value="ACI93052.1"/>
    <property type="molecule type" value="Genomic_DNA"/>
</dbReference>
<dbReference type="EMBL" id="CP002826">
    <property type="protein sequence ID" value="AEI06797.1"/>
    <property type="molecule type" value="Genomic_DNA"/>
</dbReference>
<dbReference type="RefSeq" id="WP_012563079.1">
    <property type="nucleotide sequence ID" value="NC_015684.1"/>
</dbReference>
<dbReference type="SMR" id="B6JH51"/>
<dbReference type="STRING" id="504832.OCA5_c20900"/>
<dbReference type="KEGG" id="oca:OCAR_5931"/>
<dbReference type="KEGG" id="ocg:OCA5_c20900"/>
<dbReference type="PATRIC" id="fig|504832.7.peg.2212"/>
<dbReference type="eggNOG" id="COG1143">
    <property type="taxonomic scope" value="Bacteria"/>
</dbReference>
<dbReference type="HOGENOM" id="CLU_067218_5_1_5"/>
<dbReference type="OrthoDB" id="9808559at2"/>
<dbReference type="Proteomes" id="UP000007730">
    <property type="component" value="Chromosome"/>
</dbReference>
<dbReference type="GO" id="GO:0005886">
    <property type="term" value="C:plasma membrane"/>
    <property type="evidence" value="ECO:0007669"/>
    <property type="project" value="UniProtKB-SubCell"/>
</dbReference>
<dbReference type="GO" id="GO:0051539">
    <property type="term" value="F:4 iron, 4 sulfur cluster binding"/>
    <property type="evidence" value="ECO:0007669"/>
    <property type="project" value="UniProtKB-KW"/>
</dbReference>
<dbReference type="GO" id="GO:0005506">
    <property type="term" value="F:iron ion binding"/>
    <property type="evidence" value="ECO:0007669"/>
    <property type="project" value="UniProtKB-UniRule"/>
</dbReference>
<dbReference type="GO" id="GO:0050136">
    <property type="term" value="F:NADH:ubiquinone reductase (non-electrogenic) activity"/>
    <property type="evidence" value="ECO:0007669"/>
    <property type="project" value="UniProtKB-UniRule"/>
</dbReference>
<dbReference type="GO" id="GO:0048038">
    <property type="term" value="F:quinone binding"/>
    <property type="evidence" value="ECO:0007669"/>
    <property type="project" value="UniProtKB-KW"/>
</dbReference>
<dbReference type="GO" id="GO:0009060">
    <property type="term" value="P:aerobic respiration"/>
    <property type="evidence" value="ECO:0007669"/>
    <property type="project" value="TreeGrafter"/>
</dbReference>
<dbReference type="FunFam" id="3.30.70.3270:FF:000001">
    <property type="entry name" value="NADH-quinone oxidoreductase subunit I 1"/>
    <property type="match status" value="1"/>
</dbReference>
<dbReference type="Gene3D" id="3.30.70.3270">
    <property type="match status" value="1"/>
</dbReference>
<dbReference type="HAMAP" id="MF_01351">
    <property type="entry name" value="NDH1_NuoI"/>
    <property type="match status" value="1"/>
</dbReference>
<dbReference type="InterPro" id="IPR017896">
    <property type="entry name" value="4Fe4S_Fe-S-bd"/>
</dbReference>
<dbReference type="InterPro" id="IPR017900">
    <property type="entry name" value="4Fe4S_Fe_S_CS"/>
</dbReference>
<dbReference type="InterPro" id="IPR010226">
    <property type="entry name" value="NADH_quinone_OxRdtase_chainI"/>
</dbReference>
<dbReference type="NCBIfam" id="TIGR01971">
    <property type="entry name" value="NuoI"/>
    <property type="match status" value="1"/>
</dbReference>
<dbReference type="NCBIfam" id="NF004538">
    <property type="entry name" value="PRK05888.1-4"/>
    <property type="match status" value="1"/>
</dbReference>
<dbReference type="NCBIfam" id="NF004539">
    <property type="entry name" value="PRK05888.1-5"/>
    <property type="match status" value="1"/>
</dbReference>
<dbReference type="PANTHER" id="PTHR10849:SF20">
    <property type="entry name" value="NADH DEHYDROGENASE [UBIQUINONE] IRON-SULFUR PROTEIN 8, MITOCHONDRIAL"/>
    <property type="match status" value="1"/>
</dbReference>
<dbReference type="PANTHER" id="PTHR10849">
    <property type="entry name" value="NADH DEHYDROGENASE UBIQUINONE IRON-SULFUR PROTEIN 8, MITOCHONDRIAL"/>
    <property type="match status" value="1"/>
</dbReference>
<dbReference type="Pfam" id="PF12838">
    <property type="entry name" value="Fer4_7"/>
    <property type="match status" value="1"/>
</dbReference>
<dbReference type="SUPFAM" id="SSF54862">
    <property type="entry name" value="4Fe-4S ferredoxins"/>
    <property type="match status" value="1"/>
</dbReference>
<dbReference type="PROSITE" id="PS00198">
    <property type="entry name" value="4FE4S_FER_1"/>
    <property type="match status" value="2"/>
</dbReference>
<dbReference type="PROSITE" id="PS51379">
    <property type="entry name" value="4FE4S_FER_2"/>
    <property type="match status" value="2"/>
</dbReference>
<organism>
    <name type="scientific">Afipia carboxidovorans (strain ATCC 49405 / DSM 1227 / KCTC 32145 / OM5)</name>
    <name type="common">Oligotropha carboxidovorans</name>
    <dbReference type="NCBI Taxonomy" id="504832"/>
    <lineage>
        <taxon>Bacteria</taxon>
        <taxon>Pseudomonadati</taxon>
        <taxon>Pseudomonadota</taxon>
        <taxon>Alphaproteobacteria</taxon>
        <taxon>Hyphomicrobiales</taxon>
        <taxon>Nitrobacteraceae</taxon>
        <taxon>Afipia</taxon>
    </lineage>
</organism>
<feature type="chain" id="PRO_1000143658" description="NADH-quinone oxidoreductase subunit I">
    <location>
        <begin position="1"/>
        <end position="162"/>
    </location>
</feature>
<feature type="domain" description="4Fe-4S ferredoxin-type 1" evidence="1">
    <location>
        <begin position="52"/>
        <end position="82"/>
    </location>
</feature>
<feature type="domain" description="4Fe-4S ferredoxin-type 2" evidence="1">
    <location>
        <begin position="93"/>
        <end position="122"/>
    </location>
</feature>
<feature type="binding site" evidence="1">
    <location>
        <position position="62"/>
    </location>
    <ligand>
        <name>[4Fe-4S] cluster</name>
        <dbReference type="ChEBI" id="CHEBI:49883"/>
        <label>1</label>
    </ligand>
</feature>
<feature type="binding site" evidence="1">
    <location>
        <position position="65"/>
    </location>
    <ligand>
        <name>[4Fe-4S] cluster</name>
        <dbReference type="ChEBI" id="CHEBI:49883"/>
        <label>1</label>
    </ligand>
</feature>
<feature type="binding site" evidence="1">
    <location>
        <position position="68"/>
    </location>
    <ligand>
        <name>[4Fe-4S] cluster</name>
        <dbReference type="ChEBI" id="CHEBI:49883"/>
        <label>1</label>
    </ligand>
</feature>
<feature type="binding site" evidence="1">
    <location>
        <position position="72"/>
    </location>
    <ligand>
        <name>[4Fe-4S] cluster</name>
        <dbReference type="ChEBI" id="CHEBI:49883"/>
        <label>2</label>
    </ligand>
</feature>
<feature type="binding site" evidence="1">
    <location>
        <position position="102"/>
    </location>
    <ligand>
        <name>[4Fe-4S] cluster</name>
        <dbReference type="ChEBI" id="CHEBI:49883"/>
        <label>2</label>
    </ligand>
</feature>
<feature type="binding site" evidence="1">
    <location>
        <position position="105"/>
    </location>
    <ligand>
        <name>[4Fe-4S] cluster</name>
        <dbReference type="ChEBI" id="CHEBI:49883"/>
        <label>2</label>
    </ligand>
</feature>
<feature type="binding site" evidence="1">
    <location>
        <position position="108"/>
    </location>
    <ligand>
        <name>[4Fe-4S] cluster</name>
        <dbReference type="ChEBI" id="CHEBI:49883"/>
        <label>2</label>
    </ligand>
</feature>
<feature type="binding site" evidence="1">
    <location>
        <position position="112"/>
    </location>
    <ligand>
        <name>[4Fe-4S] cluster</name>
        <dbReference type="ChEBI" id="CHEBI:49883"/>
        <label>1</label>
    </ligand>
</feature>
<evidence type="ECO:0000255" key="1">
    <source>
        <dbReference type="HAMAP-Rule" id="MF_01351"/>
    </source>
</evidence>
<comment type="function">
    <text evidence="1">NDH-1 shuttles electrons from NADH, via FMN and iron-sulfur (Fe-S) centers, to quinones in the respiratory chain. The immediate electron acceptor for the enzyme in this species is believed to be ubiquinone. Couples the redox reaction to proton translocation (for every two electrons transferred, four hydrogen ions are translocated across the cytoplasmic membrane), and thus conserves the redox energy in a proton gradient.</text>
</comment>
<comment type="catalytic activity">
    <reaction evidence="1">
        <text>a quinone + NADH + 5 H(+)(in) = a quinol + NAD(+) + 4 H(+)(out)</text>
        <dbReference type="Rhea" id="RHEA:57888"/>
        <dbReference type="ChEBI" id="CHEBI:15378"/>
        <dbReference type="ChEBI" id="CHEBI:24646"/>
        <dbReference type="ChEBI" id="CHEBI:57540"/>
        <dbReference type="ChEBI" id="CHEBI:57945"/>
        <dbReference type="ChEBI" id="CHEBI:132124"/>
    </reaction>
</comment>
<comment type="cofactor">
    <cofactor evidence="1">
        <name>[4Fe-4S] cluster</name>
        <dbReference type="ChEBI" id="CHEBI:49883"/>
    </cofactor>
    <text evidence="1">Binds 2 [4Fe-4S] clusters per subunit.</text>
</comment>
<comment type="subunit">
    <text evidence="1">NDH-1 is composed of 14 different subunits. Subunits NuoA, H, J, K, L, M, N constitute the membrane sector of the complex.</text>
</comment>
<comment type="subcellular location">
    <subcellularLocation>
        <location evidence="1">Cell inner membrane</location>
        <topology evidence="1">Peripheral membrane protein</topology>
    </subcellularLocation>
</comment>
<comment type="similarity">
    <text evidence="1">Belongs to the complex I 23 kDa subunit family.</text>
</comment>
<accession>B6JH51</accession>
<accession>F8BWM9</accession>
<keyword id="KW-0004">4Fe-4S</keyword>
<keyword id="KW-0997">Cell inner membrane</keyword>
<keyword id="KW-1003">Cell membrane</keyword>
<keyword id="KW-0408">Iron</keyword>
<keyword id="KW-0411">Iron-sulfur</keyword>
<keyword id="KW-0472">Membrane</keyword>
<keyword id="KW-0479">Metal-binding</keyword>
<keyword id="KW-0520">NAD</keyword>
<keyword id="KW-0874">Quinone</keyword>
<keyword id="KW-1185">Reference proteome</keyword>
<keyword id="KW-0677">Repeat</keyword>
<keyword id="KW-1278">Translocase</keyword>
<keyword id="KW-0830">Ubiquinone</keyword>
<name>NUOI_AFIC5</name>
<gene>
    <name evidence="1" type="primary">nuoI</name>
    <name type="ordered locus">OCAR_5931</name>
    <name type="ordered locus">OCA5_c20900</name>
</gene>
<reference key="1">
    <citation type="journal article" date="2008" name="J. Bacteriol.">
        <title>Genome sequence of the chemolithoautotrophic bacterium Oligotropha carboxidovorans OM5T.</title>
        <authorList>
            <person name="Paul D."/>
            <person name="Bridges S."/>
            <person name="Burgess S.C."/>
            <person name="Dandass Y."/>
            <person name="Lawrence M.L."/>
        </authorList>
    </citation>
    <scope>NUCLEOTIDE SEQUENCE [LARGE SCALE GENOMIC DNA]</scope>
    <source>
        <strain>ATCC 49405 / DSM 1227 / KCTC 32145 / OM5</strain>
    </source>
</reference>
<reference key="2">
    <citation type="journal article" date="2011" name="J. Bacteriol.">
        <title>Complete genome sequences of the chemolithoautotrophic Oligotropha carboxidovorans strains OM4 and OM5.</title>
        <authorList>
            <person name="Volland S."/>
            <person name="Rachinger M."/>
            <person name="Strittmatter A."/>
            <person name="Daniel R."/>
            <person name="Gottschalk G."/>
            <person name="Meyer O."/>
        </authorList>
    </citation>
    <scope>NUCLEOTIDE SEQUENCE [LARGE SCALE GENOMIC DNA]</scope>
    <source>
        <strain>ATCC 49405 / DSM 1227 / KCTC 32145 / OM5</strain>
    </source>
</reference>
<proteinExistence type="inferred from homology"/>